<protein>
    <recommendedName>
        <fullName evidence="1">Large ribosomal subunit protein uL16</fullName>
    </recommendedName>
    <alternativeName>
        <fullName evidence="3">50S ribosomal protein L16</fullName>
    </alternativeName>
</protein>
<sequence length="138" mass="15408">MLQPARRKFRKEQKGRNTGLATRGADVSFGDFGLKAVGRGRLTARQIEAARRAMTRHIKRGGRIWIRIFPDKPISRKPAEVRMGNGKGAPEYYVAEIQPGKVLYEMDGVNEQLAREAFRLAAAKLPIATTFVTRLIGS</sequence>
<dbReference type="EMBL" id="CP000116">
    <property type="protein sequence ID" value="AAZ96365.1"/>
    <property type="molecule type" value="Genomic_DNA"/>
</dbReference>
<dbReference type="RefSeq" id="WP_011310924.1">
    <property type="nucleotide sequence ID" value="NC_007404.1"/>
</dbReference>
<dbReference type="SMR" id="Q3SLP2"/>
<dbReference type="STRING" id="292415.Tbd_0412"/>
<dbReference type="KEGG" id="tbd:Tbd_0412"/>
<dbReference type="eggNOG" id="COG0197">
    <property type="taxonomic scope" value="Bacteria"/>
</dbReference>
<dbReference type="HOGENOM" id="CLU_078858_2_1_4"/>
<dbReference type="OrthoDB" id="9802589at2"/>
<dbReference type="Proteomes" id="UP000008291">
    <property type="component" value="Chromosome"/>
</dbReference>
<dbReference type="GO" id="GO:0022625">
    <property type="term" value="C:cytosolic large ribosomal subunit"/>
    <property type="evidence" value="ECO:0007669"/>
    <property type="project" value="TreeGrafter"/>
</dbReference>
<dbReference type="GO" id="GO:0019843">
    <property type="term" value="F:rRNA binding"/>
    <property type="evidence" value="ECO:0007669"/>
    <property type="project" value="UniProtKB-UniRule"/>
</dbReference>
<dbReference type="GO" id="GO:0003735">
    <property type="term" value="F:structural constituent of ribosome"/>
    <property type="evidence" value="ECO:0007669"/>
    <property type="project" value="InterPro"/>
</dbReference>
<dbReference type="GO" id="GO:0000049">
    <property type="term" value="F:tRNA binding"/>
    <property type="evidence" value="ECO:0007669"/>
    <property type="project" value="UniProtKB-KW"/>
</dbReference>
<dbReference type="GO" id="GO:0006412">
    <property type="term" value="P:translation"/>
    <property type="evidence" value="ECO:0007669"/>
    <property type="project" value="UniProtKB-UniRule"/>
</dbReference>
<dbReference type="CDD" id="cd01433">
    <property type="entry name" value="Ribosomal_L16_L10e"/>
    <property type="match status" value="1"/>
</dbReference>
<dbReference type="FunFam" id="3.90.1170.10:FF:000001">
    <property type="entry name" value="50S ribosomal protein L16"/>
    <property type="match status" value="1"/>
</dbReference>
<dbReference type="Gene3D" id="3.90.1170.10">
    <property type="entry name" value="Ribosomal protein L10e/L16"/>
    <property type="match status" value="1"/>
</dbReference>
<dbReference type="HAMAP" id="MF_01342">
    <property type="entry name" value="Ribosomal_uL16"/>
    <property type="match status" value="1"/>
</dbReference>
<dbReference type="InterPro" id="IPR047873">
    <property type="entry name" value="Ribosomal_uL16"/>
</dbReference>
<dbReference type="InterPro" id="IPR000114">
    <property type="entry name" value="Ribosomal_uL16_bact-type"/>
</dbReference>
<dbReference type="InterPro" id="IPR020798">
    <property type="entry name" value="Ribosomal_uL16_CS"/>
</dbReference>
<dbReference type="InterPro" id="IPR016180">
    <property type="entry name" value="Ribosomal_uL16_dom"/>
</dbReference>
<dbReference type="InterPro" id="IPR036920">
    <property type="entry name" value="Ribosomal_uL16_sf"/>
</dbReference>
<dbReference type="NCBIfam" id="TIGR01164">
    <property type="entry name" value="rplP_bact"/>
    <property type="match status" value="1"/>
</dbReference>
<dbReference type="PANTHER" id="PTHR12220">
    <property type="entry name" value="50S/60S RIBOSOMAL PROTEIN L16"/>
    <property type="match status" value="1"/>
</dbReference>
<dbReference type="PANTHER" id="PTHR12220:SF13">
    <property type="entry name" value="LARGE RIBOSOMAL SUBUNIT PROTEIN UL16M"/>
    <property type="match status" value="1"/>
</dbReference>
<dbReference type="Pfam" id="PF00252">
    <property type="entry name" value="Ribosomal_L16"/>
    <property type="match status" value="1"/>
</dbReference>
<dbReference type="PRINTS" id="PR00060">
    <property type="entry name" value="RIBOSOMALL16"/>
</dbReference>
<dbReference type="SUPFAM" id="SSF54686">
    <property type="entry name" value="Ribosomal protein L16p/L10e"/>
    <property type="match status" value="1"/>
</dbReference>
<dbReference type="PROSITE" id="PS00586">
    <property type="entry name" value="RIBOSOMAL_L16_1"/>
    <property type="match status" value="1"/>
</dbReference>
<accession>Q3SLP2</accession>
<gene>
    <name evidence="1" type="primary">rplP</name>
    <name type="ordered locus">Tbd_0412</name>
</gene>
<reference key="1">
    <citation type="journal article" date="2006" name="J. Bacteriol.">
        <title>The genome sequence of the obligately chemolithoautotrophic, facultatively anaerobic bacterium Thiobacillus denitrificans.</title>
        <authorList>
            <person name="Beller H.R."/>
            <person name="Chain P.S."/>
            <person name="Letain T.E."/>
            <person name="Chakicherla A."/>
            <person name="Larimer F.W."/>
            <person name="Richardson P.M."/>
            <person name="Coleman M.A."/>
            <person name="Wood A.P."/>
            <person name="Kelly D.P."/>
        </authorList>
    </citation>
    <scope>NUCLEOTIDE SEQUENCE [LARGE SCALE GENOMIC DNA]</scope>
    <source>
        <strain>ATCC 25259 / T1</strain>
    </source>
</reference>
<comment type="function">
    <text evidence="1">Binds 23S rRNA and is also seen to make contacts with the A and possibly P site tRNAs.</text>
</comment>
<comment type="subunit">
    <text evidence="1">Part of the 50S ribosomal subunit.</text>
</comment>
<comment type="similarity">
    <text evidence="1">Belongs to the universal ribosomal protein uL16 family.</text>
</comment>
<proteinExistence type="inferred from homology"/>
<organism>
    <name type="scientific">Thiobacillus denitrificans (strain ATCC 25259 / T1)</name>
    <dbReference type="NCBI Taxonomy" id="292415"/>
    <lineage>
        <taxon>Bacteria</taxon>
        <taxon>Pseudomonadati</taxon>
        <taxon>Pseudomonadota</taxon>
        <taxon>Betaproteobacteria</taxon>
        <taxon>Nitrosomonadales</taxon>
        <taxon>Thiobacillaceae</taxon>
        <taxon>Thiobacillus</taxon>
    </lineage>
</organism>
<evidence type="ECO:0000255" key="1">
    <source>
        <dbReference type="HAMAP-Rule" id="MF_01342"/>
    </source>
</evidence>
<evidence type="ECO:0000256" key="2">
    <source>
        <dbReference type="SAM" id="MobiDB-lite"/>
    </source>
</evidence>
<evidence type="ECO:0000305" key="3"/>
<keyword id="KW-1185">Reference proteome</keyword>
<keyword id="KW-0687">Ribonucleoprotein</keyword>
<keyword id="KW-0689">Ribosomal protein</keyword>
<keyword id="KW-0694">RNA-binding</keyword>
<keyword id="KW-0699">rRNA-binding</keyword>
<keyword id="KW-0820">tRNA-binding</keyword>
<feature type="chain" id="PRO_0000062238" description="Large ribosomal subunit protein uL16">
    <location>
        <begin position="1"/>
        <end position="138"/>
    </location>
</feature>
<feature type="region of interest" description="Disordered" evidence="2">
    <location>
        <begin position="1"/>
        <end position="22"/>
    </location>
</feature>
<feature type="compositionally biased region" description="Basic residues" evidence="2">
    <location>
        <begin position="1"/>
        <end position="13"/>
    </location>
</feature>
<name>RL16_THIDA</name>